<proteinExistence type="predicted"/>
<dbReference type="EMBL" id="AY653733">
    <property type="protein sequence ID" value="AAV50475.1"/>
    <property type="molecule type" value="Genomic_DNA"/>
</dbReference>
<dbReference type="SMR" id="Q5UQ15"/>
<dbReference type="KEGG" id="vg:9924809"/>
<dbReference type="OrthoDB" id="27906at10239"/>
<dbReference type="Proteomes" id="UP000001134">
    <property type="component" value="Genome"/>
</dbReference>
<keyword id="KW-1185">Reference proteome</keyword>
<gene>
    <name type="ordered locus">MIMI_L202</name>
</gene>
<organism>
    <name type="scientific">Acanthamoeba polyphaga mimivirus</name>
    <name type="common">APMV</name>
    <dbReference type="NCBI Taxonomy" id="212035"/>
    <lineage>
        <taxon>Viruses</taxon>
        <taxon>Varidnaviria</taxon>
        <taxon>Bamfordvirae</taxon>
        <taxon>Nucleocytoviricota</taxon>
        <taxon>Megaviricetes</taxon>
        <taxon>Imitervirales</taxon>
        <taxon>Mimiviridae</taxon>
        <taxon>Megamimivirinae</taxon>
        <taxon>Mimivirus</taxon>
        <taxon>Mimivirus bradfordmassiliense</taxon>
    </lineage>
</organism>
<organismHost>
    <name type="scientific">Acanthamoeba polyphaga</name>
    <name type="common">Amoeba</name>
    <dbReference type="NCBI Taxonomy" id="5757"/>
</organismHost>
<protein>
    <recommendedName>
        <fullName>Uncharacterized protein L202</fullName>
    </recommendedName>
</protein>
<evidence type="ECO:0000256" key="1">
    <source>
        <dbReference type="SAM" id="MobiDB-lite"/>
    </source>
</evidence>
<sequence length="151" mass="17588">MHAKTKKLGTDTSYKRPQVTAQEQLSPEQIAEKLEGYMQINNISEVPLDTHIRYFSIQNDGTKLFRLGGFLRNKINADKYVVLSNGKNSWTVQVKNSVFFKKMNHEEEIESIHQHYKQQLQEKDKIIFKLKNKLQLLSNQTIPLGSKNKKI</sequence>
<accession>Q5UQ15</accession>
<name>YL202_MIMIV</name>
<feature type="chain" id="PRO_0000071244" description="Uncharacterized protein L202">
    <location>
        <begin position="1"/>
        <end position="151"/>
    </location>
</feature>
<feature type="region of interest" description="Disordered" evidence="1">
    <location>
        <begin position="1"/>
        <end position="24"/>
    </location>
</feature>
<reference key="1">
    <citation type="journal article" date="2004" name="Science">
        <title>The 1.2-megabase genome sequence of Mimivirus.</title>
        <authorList>
            <person name="Raoult D."/>
            <person name="Audic S."/>
            <person name="Robert C."/>
            <person name="Abergel C."/>
            <person name="Renesto P."/>
            <person name="Ogata H."/>
            <person name="La Scola B."/>
            <person name="Susan M."/>
            <person name="Claverie J.-M."/>
        </authorList>
    </citation>
    <scope>NUCLEOTIDE SEQUENCE [LARGE SCALE GENOMIC DNA]</scope>
    <source>
        <strain>Rowbotham-Bradford</strain>
    </source>
</reference>